<dbReference type="EMBL" id="DQ438947">
    <property type="protein sequence ID" value="ABD96086.1"/>
    <property type="molecule type" value="mRNA"/>
</dbReference>
<dbReference type="EMBL" id="CH471062">
    <property type="protein sequence ID" value="EAW61812.1"/>
    <property type="molecule type" value="Genomic_DNA"/>
</dbReference>
<dbReference type="EMBL" id="BC128163">
    <property type="protein sequence ID" value="AAI28164.1"/>
    <property type="molecule type" value="mRNA"/>
</dbReference>
<dbReference type="EMBL" id="BC128164">
    <property type="protein sequence ID" value="AAI28165.1"/>
    <property type="molecule type" value="mRNA"/>
</dbReference>
<dbReference type="CCDS" id="CCDS43383.1">
    <molecule id="Q1W4C9-1"/>
</dbReference>
<dbReference type="RefSeq" id="NP_001035218.1">
    <molecule id="Q1W4C9-1"/>
    <property type="nucleotide sequence ID" value="NM_001040129.3"/>
</dbReference>
<dbReference type="SMR" id="Q1W4C9"/>
<dbReference type="FunCoup" id="Q1W4C9">
    <property type="interactions" value="5"/>
</dbReference>
<dbReference type="IntAct" id="Q1W4C9">
    <property type="interactions" value="1"/>
</dbReference>
<dbReference type="STRING" id="9606.ENSP00000421048"/>
<dbReference type="GlyCosmos" id="Q1W4C9">
    <property type="glycosylation" value="1 site, No reported glycans"/>
</dbReference>
<dbReference type="GlyGen" id="Q1W4C9">
    <property type="glycosylation" value="1 site"/>
</dbReference>
<dbReference type="iPTMnet" id="Q1W4C9"/>
<dbReference type="PhosphoSitePlus" id="Q1W4C9"/>
<dbReference type="BioMuta" id="SPINK13"/>
<dbReference type="DMDM" id="121940862"/>
<dbReference type="MassIVE" id="Q1W4C9"/>
<dbReference type="PaxDb" id="9606-ENSP00000421048"/>
<dbReference type="PeptideAtlas" id="Q1W4C9"/>
<dbReference type="ProteomicsDB" id="61247">
    <molecule id="Q1W4C9-1"/>
</dbReference>
<dbReference type="Antibodypedia" id="49010">
    <property type="antibodies" value="7 antibodies from 6 providers"/>
</dbReference>
<dbReference type="DNASU" id="153218"/>
<dbReference type="Ensembl" id="ENST00000398450.5">
    <molecule id="Q1W4C9-1"/>
    <property type="protein sequence ID" value="ENSP00000381468.4"/>
    <property type="gene ID" value="ENSG00000214510.10"/>
</dbReference>
<dbReference type="Ensembl" id="ENST00000511106.5">
    <molecule id="Q1W4C9-2"/>
    <property type="protein sequence ID" value="ENSP00000426279.1"/>
    <property type="gene ID" value="ENSG00000214510.10"/>
</dbReference>
<dbReference type="Ensembl" id="ENST00000512953.5">
    <molecule id="Q1W4C9-1"/>
    <property type="protein sequence ID" value="ENSP00000421048.1"/>
    <property type="gene ID" value="ENSG00000214510.10"/>
</dbReference>
<dbReference type="GeneID" id="153218"/>
<dbReference type="KEGG" id="hsa:153218"/>
<dbReference type="MANE-Select" id="ENST00000398450.5">
    <property type="protein sequence ID" value="ENSP00000381468.4"/>
    <property type="RefSeq nucleotide sequence ID" value="NM_001040129.3"/>
    <property type="RefSeq protein sequence ID" value="NP_001035218.1"/>
</dbReference>
<dbReference type="UCSC" id="uc003lpc.4">
    <molecule id="Q1W4C9-1"/>
    <property type="organism name" value="human"/>
</dbReference>
<dbReference type="AGR" id="HGNC:27200"/>
<dbReference type="CTD" id="153218"/>
<dbReference type="DisGeNET" id="153218"/>
<dbReference type="GeneCards" id="SPINK13"/>
<dbReference type="HGNC" id="HGNC:27200">
    <property type="gene designation" value="SPINK13"/>
</dbReference>
<dbReference type="HPA" id="ENSG00000214510">
    <property type="expression patterns" value="Tissue enriched (epididymis)"/>
</dbReference>
<dbReference type="MIM" id="615205">
    <property type="type" value="gene"/>
</dbReference>
<dbReference type="neXtProt" id="NX_Q1W4C9"/>
<dbReference type="OpenTargets" id="ENSG00000214510"/>
<dbReference type="PharmGKB" id="PA165660568"/>
<dbReference type="VEuPathDB" id="HostDB:ENSG00000214510"/>
<dbReference type="eggNOG" id="KOG3649">
    <property type="taxonomic scope" value="Eukaryota"/>
</dbReference>
<dbReference type="GeneTree" id="ENSGT00400000023784"/>
<dbReference type="HOGENOM" id="CLU_161738_0_0_1"/>
<dbReference type="InParanoid" id="Q1W4C9"/>
<dbReference type="OMA" id="FFCVEQW"/>
<dbReference type="OrthoDB" id="126772at2759"/>
<dbReference type="PAN-GO" id="Q1W4C9">
    <property type="GO annotations" value="0 GO annotations based on evolutionary models"/>
</dbReference>
<dbReference type="PhylomeDB" id="Q1W4C9"/>
<dbReference type="PathwayCommons" id="Q1W4C9"/>
<dbReference type="SignaLink" id="Q1W4C9"/>
<dbReference type="BioGRID-ORCS" id="153218">
    <property type="hits" value="10 hits in 1101 CRISPR screens"/>
</dbReference>
<dbReference type="GenomeRNAi" id="153218"/>
<dbReference type="Pharos" id="Q1W4C9">
    <property type="development level" value="Tdark"/>
</dbReference>
<dbReference type="PRO" id="PR:Q1W4C9"/>
<dbReference type="Proteomes" id="UP000005640">
    <property type="component" value="Chromosome 5"/>
</dbReference>
<dbReference type="RNAct" id="Q1W4C9">
    <property type="molecule type" value="protein"/>
</dbReference>
<dbReference type="Bgee" id="ENSG00000214510">
    <property type="expression patterns" value="Expressed in corpus epididymis and 96 other cell types or tissues"/>
</dbReference>
<dbReference type="GO" id="GO:0005576">
    <property type="term" value="C:extracellular region"/>
    <property type="evidence" value="ECO:0007669"/>
    <property type="project" value="UniProtKB-SubCell"/>
</dbReference>
<dbReference type="GO" id="GO:0004867">
    <property type="term" value="F:serine-type endopeptidase inhibitor activity"/>
    <property type="evidence" value="ECO:0007669"/>
    <property type="project" value="UniProtKB-KW"/>
</dbReference>
<dbReference type="GO" id="GO:1902225">
    <property type="term" value="P:negative regulation of acrosome reaction"/>
    <property type="evidence" value="ECO:0000250"/>
    <property type="project" value="UniProtKB"/>
</dbReference>
<dbReference type="CDD" id="cd00104">
    <property type="entry name" value="KAZAL_FS"/>
    <property type="match status" value="1"/>
</dbReference>
<dbReference type="FunFam" id="3.30.60.30:FF:000085">
    <property type="entry name" value="Serine protease inhibitor Kazal-type 13"/>
    <property type="match status" value="1"/>
</dbReference>
<dbReference type="Gene3D" id="3.30.60.30">
    <property type="match status" value="1"/>
</dbReference>
<dbReference type="InterPro" id="IPR002350">
    <property type="entry name" value="Kazal_dom"/>
</dbReference>
<dbReference type="InterPro" id="IPR036058">
    <property type="entry name" value="Kazal_dom_sf"/>
</dbReference>
<dbReference type="PANTHER" id="PTHR21312">
    <property type="entry name" value="SERINE PROTEASE INHIBITOR"/>
    <property type="match status" value="1"/>
</dbReference>
<dbReference type="PANTHER" id="PTHR21312:SF36">
    <property type="entry name" value="SERINE PROTEASE INHIBITOR KAZAL-TYPE 13"/>
    <property type="match status" value="1"/>
</dbReference>
<dbReference type="Pfam" id="PF00050">
    <property type="entry name" value="Kazal_1"/>
    <property type="match status" value="1"/>
</dbReference>
<dbReference type="SMART" id="SM00280">
    <property type="entry name" value="KAZAL"/>
    <property type="match status" value="1"/>
</dbReference>
<dbReference type="SUPFAM" id="SSF100895">
    <property type="entry name" value="Kazal-type serine protease inhibitors"/>
    <property type="match status" value="1"/>
</dbReference>
<dbReference type="PROSITE" id="PS51465">
    <property type="entry name" value="KAZAL_2"/>
    <property type="match status" value="1"/>
</dbReference>
<comment type="function">
    <text evidence="1">May be a serine protease inhibitor (By similarity). Essential for sperm maturation and fertility. Inhibits sperm acrosome reaction, protecting sperm from premature reaction (By similarity).</text>
</comment>
<comment type="interaction">
    <interactant intactId="EBI-25953827">
        <id>Q1W4C9</id>
    </interactant>
    <interactant intactId="EBI-466029">
        <id>P42858</id>
        <label>HTT</label>
    </interactant>
    <organismsDiffer>false</organismsDiffer>
    <experiments>3</experiments>
</comment>
<comment type="subcellular location">
    <subcellularLocation>
        <location evidence="1">Secreted</location>
    </subcellularLocation>
    <text evidence="1">Secreted into the lumen of the initial segment of the epididymis and binds to sperm. In the initial segment of epididymis, localizes on the dorsal surface of the acrosomal region of sperm, gradually becomes more restricted to the acrosomal region in spermatozoa during epididymal transit (By similarity).</text>
</comment>
<comment type="alternative products">
    <event type="alternative splicing"/>
    <isoform>
        <id>Q1W4C9-1</id>
        <name>1</name>
        <sequence type="displayed"/>
    </isoform>
    <isoform>
        <id>Q1W4C9-2</id>
        <name>2</name>
        <sequence type="described" ref="VSP_034842"/>
    </isoform>
</comment>
<protein>
    <recommendedName>
        <fullName>Serine protease inhibitor Kazal-type 13</fullName>
    </recommendedName>
    <alternativeName>
        <fullName>Hepatitis B virus DNA polymerase transactivated serine protease inhibitor</fullName>
    </alternativeName>
    <alternativeName>
        <fullName>Hespintor</fullName>
    </alternativeName>
    <alternativeName>
        <fullName>Serine protease inhibitor Kazal-type 5-like 3</fullName>
    </alternativeName>
</protein>
<proteinExistence type="evidence at protein level"/>
<sequence length="94" mass="11051">MAAFPHKIIFFLVCSTLTHVAFSGIFNKRDFTRWPKPRCKMYIPLDPDYNADCPNVTAPVCASNGHTFQNECFFCVEQREFHYRIKFEKYGKCD</sequence>
<feature type="signal peptide" evidence="2">
    <location>
        <begin position="1"/>
        <end position="23"/>
    </location>
</feature>
<feature type="chain" id="PRO_0000344510" description="Serine protease inhibitor Kazal-type 13">
    <location>
        <begin position="24"/>
        <end position="94"/>
    </location>
</feature>
<feature type="domain" description="Kazal-like" evidence="3">
    <location>
        <begin position="33"/>
        <end position="94"/>
    </location>
</feature>
<feature type="site" description="Reactive bond" evidence="3">
    <location>
        <begin position="55"/>
        <end position="56"/>
    </location>
</feature>
<feature type="glycosylation site" description="N-linked (GlcNAc...) asparagine" evidence="2">
    <location>
        <position position="55"/>
    </location>
</feature>
<feature type="disulfide bond" evidence="3">
    <location>
        <begin position="39"/>
        <end position="75"/>
    </location>
</feature>
<feature type="disulfide bond" evidence="3">
    <location>
        <begin position="53"/>
        <end position="72"/>
    </location>
</feature>
<feature type="disulfide bond" evidence="3">
    <location>
        <begin position="61"/>
        <end position="93"/>
    </location>
</feature>
<feature type="splice variant" id="VSP_034842" description="In isoform 2." evidence="4">
    <location>
        <begin position="1"/>
        <end position="40"/>
    </location>
</feature>
<reference key="1">
    <citation type="submission" date="2006-03" db="EMBL/GenBank/DDBJ databases">
        <title>Gene cloning and bioinformatics analysis of human hespintor: a novel serine protease inhibitor.</title>
        <authorList>
            <person name="Lun Y.Z."/>
            <person name="Yu Z.G."/>
            <person name="Cheng J."/>
        </authorList>
    </citation>
    <scope>NUCLEOTIDE SEQUENCE [MRNA] (ISOFORM 1)</scope>
</reference>
<reference key="2">
    <citation type="submission" date="2005-09" db="EMBL/GenBank/DDBJ databases">
        <authorList>
            <person name="Mural R.J."/>
            <person name="Istrail S."/>
            <person name="Sutton G.G."/>
            <person name="Florea L."/>
            <person name="Halpern A.L."/>
            <person name="Mobarry C.M."/>
            <person name="Lippert R."/>
            <person name="Walenz B."/>
            <person name="Shatkay H."/>
            <person name="Dew I."/>
            <person name="Miller J.R."/>
            <person name="Flanigan M.J."/>
            <person name="Edwards N.J."/>
            <person name="Bolanos R."/>
            <person name="Fasulo D."/>
            <person name="Halldorsson B.V."/>
            <person name="Hannenhalli S."/>
            <person name="Turner R."/>
            <person name="Yooseph S."/>
            <person name="Lu F."/>
            <person name="Nusskern D.R."/>
            <person name="Shue B.C."/>
            <person name="Zheng X.H."/>
            <person name="Zhong F."/>
            <person name="Delcher A.L."/>
            <person name="Huson D.H."/>
            <person name="Kravitz S.A."/>
            <person name="Mouchard L."/>
            <person name="Reinert K."/>
            <person name="Remington K.A."/>
            <person name="Clark A.G."/>
            <person name="Waterman M.S."/>
            <person name="Eichler E.E."/>
            <person name="Adams M.D."/>
            <person name="Hunkapiller M.W."/>
            <person name="Myers E.W."/>
            <person name="Venter J.C."/>
        </authorList>
    </citation>
    <scope>NUCLEOTIDE SEQUENCE [LARGE SCALE GENOMIC DNA]</scope>
</reference>
<reference key="3">
    <citation type="journal article" date="2004" name="Genome Res.">
        <title>The status, quality, and expansion of the NIH full-length cDNA project: the Mammalian Gene Collection (MGC).</title>
        <authorList>
            <consortium name="The MGC Project Team"/>
        </authorList>
    </citation>
    <scope>NUCLEOTIDE SEQUENCE [LARGE SCALE MRNA] (ISOFORMS 1 AND 2)</scope>
</reference>
<evidence type="ECO:0000250" key="1"/>
<evidence type="ECO:0000255" key="2"/>
<evidence type="ECO:0000255" key="3">
    <source>
        <dbReference type="PROSITE-ProRule" id="PRU00798"/>
    </source>
</evidence>
<evidence type="ECO:0000303" key="4">
    <source>
    </source>
</evidence>
<organism>
    <name type="scientific">Homo sapiens</name>
    <name type="common">Human</name>
    <dbReference type="NCBI Taxonomy" id="9606"/>
    <lineage>
        <taxon>Eukaryota</taxon>
        <taxon>Metazoa</taxon>
        <taxon>Chordata</taxon>
        <taxon>Craniata</taxon>
        <taxon>Vertebrata</taxon>
        <taxon>Euteleostomi</taxon>
        <taxon>Mammalia</taxon>
        <taxon>Eutheria</taxon>
        <taxon>Euarchontoglires</taxon>
        <taxon>Primates</taxon>
        <taxon>Haplorrhini</taxon>
        <taxon>Catarrhini</taxon>
        <taxon>Hominidae</taxon>
        <taxon>Homo</taxon>
    </lineage>
</organism>
<accession>Q1W4C9</accession>
<accession>A1A4Y2</accession>
<gene>
    <name type="primary">SPINK13</name>
    <name type="synonym">HBVDNAPTP1</name>
    <name type="synonym">SPINK5L3</name>
</gene>
<keyword id="KW-0025">Alternative splicing</keyword>
<keyword id="KW-1015">Disulfide bond</keyword>
<keyword id="KW-0325">Glycoprotein</keyword>
<keyword id="KW-0646">Protease inhibitor</keyword>
<keyword id="KW-1267">Proteomics identification</keyword>
<keyword id="KW-1185">Reference proteome</keyword>
<keyword id="KW-0964">Secreted</keyword>
<keyword id="KW-0722">Serine protease inhibitor</keyword>
<keyword id="KW-0732">Signal</keyword>
<name>ISK13_HUMAN</name>